<organism>
    <name type="scientific">Solidesulfovibrio magneticus (strain ATCC 700980 / DSM 13731 / RS-1)</name>
    <name type="common">Desulfovibrio magneticus</name>
    <dbReference type="NCBI Taxonomy" id="573370"/>
    <lineage>
        <taxon>Bacteria</taxon>
        <taxon>Pseudomonadati</taxon>
        <taxon>Thermodesulfobacteriota</taxon>
        <taxon>Desulfovibrionia</taxon>
        <taxon>Desulfovibrionales</taxon>
        <taxon>Desulfovibrionaceae</taxon>
        <taxon>Solidesulfovibrio</taxon>
    </lineage>
</organism>
<accession>C4XN27</accession>
<sequence length="297" mass="31650">MNREHAKAHLLLEALPYIRNFYGQTVVIKYGGHAMVDEQLQESFALNVILLKYIGINPVIVHGGGPQIGRMLKLLNIESQFKQGLRVTDDATMDVVEMVLVGKVNKNIVNLINLKGGSAVGLSGKDGRLITARKLEMVLERGDAPPEIIDLGKVGEVTGINTQLITTLLAQGFIPVIAPVGVDEDGETYNINADTVAGAVAAALGAKRLVLLTDVSGVLDKDKTLISSLDIKEASQAMADGVLVGGMIPKVSCCMEAVDAGVEKAHILDGRVENCIILELFTRSGIGTEIVCKRCQA</sequence>
<protein>
    <recommendedName>
        <fullName evidence="1">Acetylglutamate kinase</fullName>
        <ecNumber evidence="1">2.7.2.8</ecNumber>
    </recommendedName>
    <alternativeName>
        <fullName evidence="1">N-acetyl-L-glutamate 5-phosphotransferase</fullName>
    </alternativeName>
    <alternativeName>
        <fullName evidence="1">NAG kinase</fullName>
        <shortName evidence="1">NAGK</shortName>
    </alternativeName>
</protein>
<comment type="function">
    <text evidence="1">Catalyzes the ATP-dependent phosphorylation of N-acetyl-L-glutamate.</text>
</comment>
<comment type="catalytic activity">
    <reaction evidence="1">
        <text>N-acetyl-L-glutamate + ATP = N-acetyl-L-glutamyl 5-phosphate + ADP</text>
        <dbReference type="Rhea" id="RHEA:14629"/>
        <dbReference type="ChEBI" id="CHEBI:30616"/>
        <dbReference type="ChEBI" id="CHEBI:44337"/>
        <dbReference type="ChEBI" id="CHEBI:57936"/>
        <dbReference type="ChEBI" id="CHEBI:456216"/>
        <dbReference type="EC" id="2.7.2.8"/>
    </reaction>
</comment>
<comment type="pathway">
    <text evidence="1">Amino-acid biosynthesis; L-arginine biosynthesis; N(2)-acetyl-L-ornithine from L-glutamate: step 2/4.</text>
</comment>
<comment type="subcellular location">
    <subcellularLocation>
        <location evidence="1">Cytoplasm</location>
    </subcellularLocation>
</comment>
<comment type="similarity">
    <text evidence="1">Belongs to the acetylglutamate kinase family. ArgB subfamily.</text>
</comment>
<reference key="1">
    <citation type="journal article" date="2009" name="Genome Res.">
        <title>Whole genome sequence of Desulfovibrio magneticus strain RS-1 revealed common gene clusters in magnetotactic bacteria.</title>
        <authorList>
            <person name="Nakazawa H."/>
            <person name="Arakaki A."/>
            <person name="Narita-Yamada S."/>
            <person name="Yashiro I."/>
            <person name="Jinno K."/>
            <person name="Aoki N."/>
            <person name="Tsuruyama A."/>
            <person name="Okamura Y."/>
            <person name="Tanikawa S."/>
            <person name="Fujita N."/>
            <person name="Takeyama H."/>
            <person name="Matsunaga T."/>
        </authorList>
    </citation>
    <scope>NUCLEOTIDE SEQUENCE [LARGE SCALE GENOMIC DNA]</scope>
    <source>
        <strain>ATCC 700980 / DSM 13731 / RS-1</strain>
    </source>
</reference>
<proteinExistence type="inferred from homology"/>
<feature type="chain" id="PRO_1000202559" description="Acetylglutamate kinase">
    <location>
        <begin position="1"/>
        <end position="297"/>
    </location>
</feature>
<feature type="binding site" evidence="1">
    <location>
        <begin position="64"/>
        <end position="65"/>
    </location>
    <ligand>
        <name>substrate</name>
    </ligand>
</feature>
<feature type="binding site" evidence="1">
    <location>
        <position position="86"/>
    </location>
    <ligand>
        <name>substrate</name>
    </ligand>
</feature>
<feature type="binding site" evidence="1">
    <location>
        <position position="190"/>
    </location>
    <ligand>
        <name>substrate</name>
    </ligand>
</feature>
<feature type="site" description="Transition state stabilizer" evidence="1">
    <location>
        <position position="29"/>
    </location>
</feature>
<feature type="site" description="Transition state stabilizer" evidence="1">
    <location>
        <position position="250"/>
    </location>
</feature>
<evidence type="ECO:0000255" key="1">
    <source>
        <dbReference type="HAMAP-Rule" id="MF_00082"/>
    </source>
</evidence>
<name>ARGB_SOLM1</name>
<dbReference type="EC" id="2.7.2.8" evidence="1"/>
<dbReference type="EMBL" id="AP010904">
    <property type="protein sequence ID" value="BAH77330.1"/>
    <property type="molecule type" value="Genomic_DNA"/>
</dbReference>
<dbReference type="RefSeq" id="WP_015862470.1">
    <property type="nucleotide sequence ID" value="NC_012796.1"/>
</dbReference>
<dbReference type="SMR" id="C4XN27"/>
<dbReference type="STRING" id="573370.DMR_38390"/>
<dbReference type="KEGG" id="dma:DMR_38390"/>
<dbReference type="eggNOG" id="COG0548">
    <property type="taxonomic scope" value="Bacteria"/>
</dbReference>
<dbReference type="HOGENOM" id="CLU_053680_0_0_7"/>
<dbReference type="OrthoDB" id="9803155at2"/>
<dbReference type="UniPathway" id="UPA00068">
    <property type="reaction ID" value="UER00107"/>
</dbReference>
<dbReference type="Proteomes" id="UP000009071">
    <property type="component" value="Chromosome"/>
</dbReference>
<dbReference type="GO" id="GO:0005737">
    <property type="term" value="C:cytoplasm"/>
    <property type="evidence" value="ECO:0007669"/>
    <property type="project" value="UniProtKB-SubCell"/>
</dbReference>
<dbReference type="GO" id="GO:0003991">
    <property type="term" value="F:acetylglutamate kinase activity"/>
    <property type="evidence" value="ECO:0007669"/>
    <property type="project" value="UniProtKB-UniRule"/>
</dbReference>
<dbReference type="GO" id="GO:0005524">
    <property type="term" value="F:ATP binding"/>
    <property type="evidence" value="ECO:0007669"/>
    <property type="project" value="UniProtKB-UniRule"/>
</dbReference>
<dbReference type="GO" id="GO:0042450">
    <property type="term" value="P:arginine biosynthetic process via ornithine"/>
    <property type="evidence" value="ECO:0007669"/>
    <property type="project" value="UniProtKB-UniRule"/>
</dbReference>
<dbReference type="GO" id="GO:0006526">
    <property type="term" value="P:L-arginine biosynthetic process"/>
    <property type="evidence" value="ECO:0007669"/>
    <property type="project" value="UniProtKB-UniPathway"/>
</dbReference>
<dbReference type="CDD" id="cd04250">
    <property type="entry name" value="AAK_NAGK-C"/>
    <property type="match status" value="1"/>
</dbReference>
<dbReference type="FunFam" id="3.40.1160.10:FF:000004">
    <property type="entry name" value="Acetylglutamate kinase"/>
    <property type="match status" value="1"/>
</dbReference>
<dbReference type="Gene3D" id="3.40.1160.10">
    <property type="entry name" value="Acetylglutamate kinase-like"/>
    <property type="match status" value="1"/>
</dbReference>
<dbReference type="HAMAP" id="MF_00082">
    <property type="entry name" value="ArgB"/>
    <property type="match status" value="1"/>
</dbReference>
<dbReference type="InterPro" id="IPR036393">
    <property type="entry name" value="AceGlu_kinase-like_sf"/>
</dbReference>
<dbReference type="InterPro" id="IPR004662">
    <property type="entry name" value="AcgluKinase_fam"/>
</dbReference>
<dbReference type="InterPro" id="IPR037528">
    <property type="entry name" value="ArgB"/>
</dbReference>
<dbReference type="InterPro" id="IPR001048">
    <property type="entry name" value="Asp/Glu/Uridylate_kinase"/>
</dbReference>
<dbReference type="InterPro" id="IPR001057">
    <property type="entry name" value="Glu/AcGlu_kinase"/>
</dbReference>
<dbReference type="InterPro" id="IPR041727">
    <property type="entry name" value="NAGK-C"/>
</dbReference>
<dbReference type="NCBIfam" id="TIGR00761">
    <property type="entry name" value="argB"/>
    <property type="match status" value="1"/>
</dbReference>
<dbReference type="PANTHER" id="PTHR23342">
    <property type="entry name" value="N-ACETYLGLUTAMATE SYNTHASE"/>
    <property type="match status" value="1"/>
</dbReference>
<dbReference type="PANTHER" id="PTHR23342:SF0">
    <property type="entry name" value="N-ACETYLGLUTAMATE SYNTHASE, MITOCHONDRIAL"/>
    <property type="match status" value="1"/>
</dbReference>
<dbReference type="Pfam" id="PF00696">
    <property type="entry name" value="AA_kinase"/>
    <property type="match status" value="1"/>
</dbReference>
<dbReference type="PIRSF" id="PIRSF000728">
    <property type="entry name" value="NAGK"/>
    <property type="match status" value="1"/>
</dbReference>
<dbReference type="PRINTS" id="PR00474">
    <property type="entry name" value="GLU5KINASE"/>
</dbReference>
<dbReference type="SUPFAM" id="SSF53633">
    <property type="entry name" value="Carbamate kinase-like"/>
    <property type="match status" value="1"/>
</dbReference>
<gene>
    <name evidence="1" type="primary">argB</name>
    <name type="ordered locus">DMR_38390</name>
</gene>
<keyword id="KW-0028">Amino-acid biosynthesis</keyword>
<keyword id="KW-0055">Arginine biosynthesis</keyword>
<keyword id="KW-0067">ATP-binding</keyword>
<keyword id="KW-0963">Cytoplasm</keyword>
<keyword id="KW-0418">Kinase</keyword>
<keyword id="KW-0547">Nucleotide-binding</keyword>
<keyword id="KW-0808">Transferase</keyword>